<comment type="function">
    <text evidence="1">Catalyzes the phosphorylation of N-acetylmannosamine (ManNAc) to ManNAc-6-P.</text>
</comment>
<comment type="catalytic activity">
    <reaction evidence="1">
        <text>an N-acyl-D-mannosamine + ATP = an N-acyl-D-mannosamine 6-phosphate + ADP + H(+)</text>
        <dbReference type="Rhea" id="RHEA:23832"/>
        <dbReference type="ChEBI" id="CHEBI:15378"/>
        <dbReference type="ChEBI" id="CHEBI:16062"/>
        <dbReference type="ChEBI" id="CHEBI:30616"/>
        <dbReference type="ChEBI" id="CHEBI:57666"/>
        <dbReference type="ChEBI" id="CHEBI:456216"/>
        <dbReference type="EC" id="2.7.1.60"/>
    </reaction>
</comment>
<comment type="pathway">
    <text evidence="1">Amino-sugar metabolism; N-acetylneuraminate degradation; D-fructose 6-phosphate from N-acetylneuraminate: step 2/5.</text>
</comment>
<comment type="subunit">
    <text evidence="1">Homodimer.</text>
</comment>
<comment type="similarity">
    <text evidence="1">Belongs to the ROK (NagC/XylR) family. NanK subfamily.</text>
</comment>
<accession>C4ZSW0</accession>
<proteinExistence type="inferred from homology"/>
<name>NANK_ECOBW</name>
<sequence length="291" mass="29644">MTTLAIDIGGTKLAAALIGADGQIRDRRELPTPASQTPEALRDALSALVSPLQAHAQRVAIASTGIIRDGSLLALNPHNLGGLLHFPLVKTLEQLTNLPTIAINDAQAAAWAEFQALDGDITDMVFITVSTGVGGGVVSGCKLLTGPGGLAGHIGHTLADPHGPVCGCGRTGCVEAIASGRGIAAAAQGELAGADAKTIFTRAGQGDEQAQQLIHRSARTLARLIADIKATTDCQCVVVGGSVGLAEGYLALVETYLAQEPAAFHVDLLAAHYRHDAGLLGAALLAQGEKL</sequence>
<reference key="1">
    <citation type="journal article" date="2009" name="J. Bacteriol.">
        <title>Genomic sequencing reveals regulatory mutations and recombinational events in the widely used MC4100 lineage of Escherichia coli K-12.</title>
        <authorList>
            <person name="Ferenci T."/>
            <person name="Zhou Z."/>
            <person name="Betteridge T."/>
            <person name="Ren Y."/>
            <person name="Liu Y."/>
            <person name="Feng L."/>
            <person name="Reeves P.R."/>
            <person name="Wang L."/>
        </authorList>
    </citation>
    <scope>NUCLEOTIDE SEQUENCE [LARGE SCALE GENOMIC DNA]</scope>
    <source>
        <strain>K12 / MC4100 / BW2952</strain>
    </source>
</reference>
<feature type="chain" id="PRO_1000214032" description="N-acetylmannosamine kinase">
    <location>
        <begin position="1"/>
        <end position="291"/>
    </location>
</feature>
<feature type="binding site" evidence="1">
    <location>
        <begin position="5"/>
        <end position="12"/>
    </location>
    <ligand>
        <name>ATP</name>
        <dbReference type="ChEBI" id="CHEBI:30616"/>
    </ligand>
</feature>
<feature type="binding site" evidence="1">
    <location>
        <begin position="132"/>
        <end position="139"/>
    </location>
    <ligand>
        <name>ATP</name>
        <dbReference type="ChEBI" id="CHEBI:30616"/>
    </ligand>
</feature>
<feature type="binding site" evidence="1">
    <location>
        <position position="156"/>
    </location>
    <ligand>
        <name>Zn(2+)</name>
        <dbReference type="ChEBI" id="CHEBI:29105"/>
    </ligand>
</feature>
<feature type="binding site" evidence="1">
    <location>
        <position position="166"/>
    </location>
    <ligand>
        <name>Zn(2+)</name>
        <dbReference type="ChEBI" id="CHEBI:29105"/>
    </ligand>
</feature>
<feature type="binding site" evidence="1">
    <location>
        <position position="168"/>
    </location>
    <ligand>
        <name>Zn(2+)</name>
        <dbReference type="ChEBI" id="CHEBI:29105"/>
    </ligand>
</feature>
<feature type="binding site" evidence="1">
    <location>
        <position position="173"/>
    </location>
    <ligand>
        <name>Zn(2+)</name>
        <dbReference type="ChEBI" id="CHEBI:29105"/>
    </ligand>
</feature>
<organism>
    <name type="scientific">Escherichia coli (strain K12 / MC4100 / BW2952)</name>
    <dbReference type="NCBI Taxonomy" id="595496"/>
    <lineage>
        <taxon>Bacteria</taxon>
        <taxon>Pseudomonadati</taxon>
        <taxon>Pseudomonadota</taxon>
        <taxon>Gammaproteobacteria</taxon>
        <taxon>Enterobacterales</taxon>
        <taxon>Enterobacteriaceae</taxon>
        <taxon>Escherichia</taxon>
    </lineage>
</organism>
<keyword id="KW-0067">ATP-binding</keyword>
<keyword id="KW-0119">Carbohydrate metabolism</keyword>
<keyword id="KW-0418">Kinase</keyword>
<keyword id="KW-0479">Metal-binding</keyword>
<keyword id="KW-0547">Nucleotide-binding</keyword>
<keyword id="KW-0808">Transferase</keyword>
<keyword id="KW-0862">Zinc</keyword>
<protein>
    <recommendedName>
        <fullName evidence="1">N-acetylmannosamine kinase</fullName>
        <ecNumber evidence="1">2.7.1.60</ecNumber>
    </recommendedName>
    <alternativeName>
        <fullName evidence="1">ManNAc kinase</fullName>
    </alternativeName>
    <alternativeName>
        <fullName evidence="1">N-acetyl-D-mannosamine kinase</fullName>
    </alternativeName>
</protein>
<gene>
    <name evidence="1" type="primary">nanK</name>
    <name type="ordered locus">BWG_2923</name>
</gene>
<dbReference type="EC" id="2.7.1.60" evidence="1"/>
<dbReference type="EMBL" id="CP001396">
    <property type="protein sequence ID" value="ACR64685.1"/>
    <property type="molecule type" value="Genomic_DNA"/>
</dbReference>
<dbReference type="RefSeq" id="WP_000209011.1">
    <property type="nucleotide sequence ID" value="NC_012759.1"/>
</dbReference>
<dbReference type="SMR" id="C4ZSW0"/>
<dbReference type="KEGG" id="ebw:BWG_2923"/>
<dbReference type="HOGENOM" id="CLU_036604_0_4_6"/>
<dbReference type="UniPathway" id="UPA00629">
    <property type="reaction ID" value="UER00681"/>
</dbReference>
<dbReference type="GO" id="GO:0005524">
    <property type="term" value="F:ATP binding"/>
    <property type="evidence" value="ECO:0007669"/>
    <property type="project" value="UniProtKB-UniRule"/>
</dbReference>
<dbReference type="GO" id="GO:0009384">
    <property type="term" value="F:N-acylmannosamine kinase activity"/>
    <property type="evidence" value="ECO:0007669"/>
    <property type="project" value="UniProtKB-UniRule"/>
</dbReference>
<dbReference type="GO" id="GO:0008270">
    <property type="term" value="F:zinc ion binding"/>
    <property type="evidence" value="ECO:0007669"/>
    <property type="project" value="UniProtKB-UniRule"/>
</dbReference>
<dbReference type="GO" id="GO:0019262">
    <property type="term" value="P:N-acetylneuraminate catabolic process"/>
    <property type="evidence" value="ECO:0007669"/>
    <property type="project" value="UniProtKB-UniRule"/>
</dbReference>
<dbReference type="CDD" id="cd24069">
    <property type="entry name" value="ASKHA_NBD_ROK_EcNanK-like"/>
    <property type="match status" value="1"/>
</dbReference>
<dbReference type="FunFam" id="3.30.420.40:FF:000062">
    <property type="entry name" value="N-acetylmannosamine kinase"/>
    <property type="match status" value="1"/>
</dbReference>
<dbReference type="FunFam" id="3.30.420.40:FF:000063">
    <property type="entry name" value="N-acetylmannosamine kinase"/>
    <property type="match status" value="1"/>
</dbReference>
<dbReference type="Gene3D" id="3.30.420.40">
    <property type="match status" value="2"/>
</dbReference>
<dbReference type="HAMAP" id="MF_01234">
    <property type="entry name" value="ManNAc_kinase"/>
    <property type="match status" value="1"/>
</dbReference>
<dbReference type="InterPro" id="IPR043129">
    <property type="entry name" value="ATPase_NBD"/>
</dbReference>
<dbReference type="InterPro" id="IPR023945">
    <property type="entry name" value="ManNAc_kinase_bac"/>
</dbReference>
<dbReference type="InterPro" id="IPR000600">
    <property type="entry name" value="ROK"/>
</dbReference>
<dbReference type="InterPro" id="IPR049874">
    <property type="entry name" value="ROK_cs"/>
</dbReference>
<dbReference type="NCBIfam" id="NF047821">
    <property type="entry name" value="NactlManKinNanK"/>
    <property type="match status" value="1"/>
</dbReference>
<dbReference type="NCBIfam" id="NF003461">
    <property type="entry name" value="PRK05082.1"/>
    <property type="match status" value="1"/>
</dbReference>
<dbReference type="PANTHER" id="PTHR18964:SF169">
    <property type="entry name" value="N-ACETYLMANNOSAMINE KINASE"/>
    <property type="match status" value="1"/>
</dbReference>
<dbReference type="PANTHER" id="PTHR18964">
    <property type="entry name" value="ROK (REPRESSOR, ORF, KINASE) FAMILY"/>
    <property type="match status" value="1"/>
</dbReference>
<dbReference type="Pfam" id="PF00480">
    <property type="entry name" value="ROK"/>
    <property type="match status" value="1"/>
</dbReference>
<dbReference type="SUPFAM" id="SSF53067">
    <property type="entry name" value="Actin-like ATPase domain"/>
    <property type="match status" value="1"/>
</dbReference>
<dbReference type="PROSITE" id="PS01125">
    <property type="entry name" value="ROK"/>
    <property type="match status" value="1"/>
</dbReference>
<evidence type="ECO:0000255" key="1">
    <source>
        <dbReference type="HAMAP-Rule" id="MF_01234"/>
    </source>
</evidence>